<keyword id="KW-0030">Aminoacyl-tRNA synthetase</keyword>
<keyword id="KW-0067">ATP-binding</keyword>
<keyword id="KW-0963">Cytoplasm</keyword>
<keyword id="KW-0436">Ligase</keyword>
<keyword id="KW-0547">Nucleotide-binding</keyword>
<keyword id="KW-0648">Protein biosynthesis</keyword>
<accession>A9ISQ6</accession>
<organism>
    <name type="scientific">Bartonella tribocorum (strain CIP 105476 / IBS 506)</name>
    <dbReference type="NCBI Taxonomy" id="382640"/>
    <lineage>
        <taxon>Bacteria</taxon>
        <taxon>Pseudomonadati</taxon>
        <taxon>Pseudomonadota</taxon>
        <taxon>Alphaproteobacteria</taxon>
        <taxon>Hyphomicrobiales</taxon>
        <taxon>Bartonellaceae</taxon>
        <taxon>Bartonella</taxon>
    </lineage>
</organism>
<dbReference type="EC" id="6.1.1.17" evidence="1"/>
<dbReference type="EMBL" id="AM260525">
    <property type="protein sequence ID" value="CAK01328.1"/>
    <property type="molecule type" value="Genomic_DNA"/>
</dbReference>
<dbReference type="RefSeq" id="WP_012231524.1">
    <property type="nucleotide sequence ID" value="NC_010161.1"/>
</dbReference>
<dbReference type="SMR" id="A9ISQ6"/>
<dbReference type="KEGG" id="btr:BT_0931"/>
<dbReference type="eggNOG" id="COG0008">
    <property type="taxonomic scope" value="Bacteria"/>
</dbReference>
<dbReference type="HOGENOM" id="CLU_015768_6_3_5"/>
<dbReference type="Proteomes" id="UP000001592">
    <property type="component" value="Chromosome"/>
</dbReference>
<dbReference type="GO" id="GO:0005829">
    <property type="term" value="C:cytosol"/>
    <property type="evidence" value="ECO:0007669"/>
    <property type="project" value="TreeGrafter"/>
</dbReference>
<dbReference type="GO" id="GO:0005524">
    <property type="term" value="F:ATP binding"/>
    <property type="evidence" value="ECO:0007669"/>
    <property type="project" value="UniProtKB-UniRule"/>
</dbReference>
<dbReference type="GO" id="GO:0004818">
    <property type="term" value="F:glutamate-tRNA ligase activity"/>
    <property type="evidence" value="ECO:0007669"/>
    <property type="project" value="UniProtKB-UniRule"/>
</dbReference>
<dbReference type="GO" id="GO:0000049">
    <property type="term" value="F:tRNA binding"/>
    <property type="evidence" value="ECO:0007669"/>
    <property type="project" value="InterPro"/>
</dbReference>
<dbReference type="GO" id="GO:0008270">
    <property type="term" value="F:zinc ion binding"/>
    <property type="evidence" value="ECO:0007669"/>
    <property type="project" value="InterPro"/>
</dbReference>
<dbReference type="GO" id="GO:0006424">
    <property type="term" value="P:glutamyl-tRNA aminoacylation"/>
    <property type="evidence" value="ECO:0007669"/>
    <property type="project" value="UniProtKB-UniRule"/>
</dbReference>
<dbReference type="CDD" id="cd00808">
    <property type="entry name" value="GluRS_core"/>
    <property type="match status" value="1"/>
</dbReference>
<dbReference type="FunFam" id="3.40.50.620:FF:000007">
    <property type="entry name" value="Glutamate--tRNA ligase"/>
    <property type="match status" value="1"/>
</dbReference>
<dbReference type="Gene3D" id="1.10.10.350">
    <property type="match status" value="1"/>
</dbReference>
<dbReference type="Gene3D" id="3.40.50.620">
    <property type="entry name" value="HUPs"/>
    <property type="match status" value="1"/>
</dbReference>
<dbReference type="HAMAP" id="MF_00022">
    <property type="entry name" value="Glu_tRNA_synth_type1"/>
    <property type="match status" value="1"/>
</dbReference>
<dbReference type="InterPro" id="IPR045462">
    <property type="entry name" value="aa-tRNA-synth_I_cd-bd"/>
</dbReference>
<dbReference type="InterPro" id="IPR020751">
    <property type="entry name" value="aa-tRNA-synth_I_codon-bd_sub2"/>
</dbReference>
<dbReference type="InterPro" id="IPR001412">
    <property type="entry name" value="aa-tRNA-synth_I_CS"/>
</dbReference>
<dbReference type="InterPro" id="IPR008925">
    <property type="entry name" value="aa_tRNA-synth_I_cd-bd_sf"/>
</dbReference>
<dbReference type="InterPro" id="IPR004527">
    <property type="entry name" value="Glu-tRNA-ligase_bac/mito"/>
</dbReference>
<dbReference type="InterPro" id="IPR000924">
    <property type="entry name" value="Glu/Gln-tRNA-synth"/>
</dbReference>
<dbReference type="InterPro" id="IPR020058">
    <property type="entry name" value="Glu/Gln-tRNA-synth_Ib_cat-dom"/>
</dbReference>
<dbReference type="InterPro" id="IPR049940">
    <property type="entry name" value="GluQ/Sye"/>
</dbReference>
<dbReference type="InterPro" id="IPR033910">
    <property type="entry name" value="GluRS_core"/>
</dbReference>
<dbReference type="InterPro" id="IPR014729">
    <property type="entry name" value="Rossmann-like_a/b/a_fold"/>
</dbReference>
<dbReference type="NCBIfam" id="TIGR00464">
    <property type="entry name" value="gltX_bact"/>
    <property type="match status" value="1"/>
</dbReference>
<dbReference type="PANTHER" id="PTHR43311">
    <property type="entry name" value="GLUTAMATE--TRNA LIGASE"/>
    <property type="match status" value="1"/>
</dbReference>
<dbReference type="PANTHER" id="PTHR43311:SF2">
    <property type="entry name" value="GLUTAMATE--TRNA LIGASE, MITOCHONDRIAL-RELATED"/>
    <property type="match status" value="1"/>
</dbReference>
<dbReference type="Pfam" id="PF19269">
    <property type="entry name" value="Anticodon_2"/>
    <property type="match status" value="1"/>
</dbReference>
<dbReference type="Pfam" id="PF00749">
    <property type="entry name" value="tRNA-synt_1c"/>
    <property type="match status" value="1"/>
</dbReference>
<dbReference type="PRINTS" id="PR00987">
    <property type="entry name" value="TRNASYNTHGLU"/>
</dbReference>
<dbReference type="SUPFAM" id="SSF48163">
    <property type="entry name" value="An anticodon-binding domain of class I aminoacyl-tRNA synthetases"/>
    <property type="match status" value="1"/>
</dbReference>
<dbReference type="SUPFAM" id="SSF52374">
    <property type="entry name" value="Nucleotidylyl transferase"/>
    <property type="match status" value="1"/>
</dbReference>
<dbReference type="PROSITE" id="PS00178">
    <property type="entry name" value="AA_TRNA_LIGASE_I"/>
    <property type="match status" value="1"/>
</dbReference>
<gene>
    <name evidence="1" type="primary">gltX1</name>
    <name type="ordered locus">BT_0931</name>
</gene>
<name>SYE1_BART1</name>
<evidence type="ECO:0000255" key="1">
    <source>
        <dbReference type="HAMAP-Rule" id="MF_00022"/>
    </source>
</evidence>
<comment type="function">
    <text evidence="1">Catalyzes the attachment of glutamate to tRNA(Glu) in a two-step reaction: glutamate is first activated by ATP to form Glu-AMP and then transferred to the acceptor end of tRNA(Glu).</text>
</comment>
<comment type="catalytic activity">
    <reaction evidence="1">
        <text>tRNA(Glu) + L-glutamate + ATP = L-glutamyl-tRNA(Glu) + AMP + diphosphate</text>
        <dbReference type="Rhea" id="RHEA:23540"/>
        <dbReference type="Rhea" id="RHEA-COMP:9663"/>
        <dbReference type="Rhea" id="RHEA-COMP:9680"/>
        <dbReference type="ChEBI" id="CHEBI:29985"/>
        <dbReference type="ChEBI" id="CHEBI:30616"/>
        <dbReference type="ChEBI" id="CHEBI:33019"/>
        <dbReference type="ChEBI" id="CHEBI:78442"/>
        <dbReference type="ChEBI" id="CHEBI:78520"/>
        <dbReference type="ChEBI" id="CHEBI:456215"/>
        <dbReference type="EC" id="6.1.1.17"/>
    </reaction>
</comment>
<comment type="subunit">
    <text evidence="1">Monomer.</text>
</comment>
<comment type="subcellular location">
    <subcellularLocation>
        <location evidence="1">Cytoplasm</location>
    </subcellularLocation>
</comment>
<comment type="similarity">
    <text evidence="1">Belongs to the class-I aminoacyl-tRNA synthetase family. Glutamate--tRNA ligase type 1 subfamily.</text>
</comment>
<protein>
    <recommendedName>
        <fullName evidence="1">Glutamate--tRNA ligase 1</fullName>
        <ecNumber evidence="1">6.1.1.17</ecNumber>
    </recommendedName>
    <alternativeName>
        <fullName evidence="1">Glutamyl-tRNA synthetase 1</fullName>
        <shortName evidence="1">GluRS 1</shortName>
    </alternativeName>
</protein>
<reference key="1">
    <citation type="journal article" date="2007" name="Nat. Genet.">
        <title>Genomic analysis of Bartonella identifies type IV secretion systems as host adaptability factors.</title>
        <authorList>
            <person name="Saenz H.L."/>
            <person name="Engel P."/>
            <person name="Stoeckli M.C."/>
            <person name="Lanz C."/>
            <person name="Raddatz G."/>
            <person name="Vayssier-Taussat M."/>
            <person name="Birtles R."/>
            <person name="Schuster S.C."/>
            <person name="Dehio C."/>
        </authorList>
    </citation>
    <scope>NUCLEOTIDE SEQUENCE [LARGE SCALE GENOMIC DNA]</scope>
    <source>
        <strain>CIP 105476 / IBS 506</strain>
    </source>
</reference>
<sequence>MSVITRFAPSPTGFLHIGGARTALFNWLYAKHTGGKMLLRIEDTDRERSTEAAVRAIIDGLHWMGLSYDGSPISQFERAERHRQIAEQLVENGKAYYCYASPEELAEMREKARAEGRPPRYDGRWRNRDHSEAPQGIKPVIRIKAPEDGETIVHDRVQGDVRFPNKDLDDFIILRSDGSPTYMHAVVVDDHDMGVTHIIRGDDHLTNAARQTIIFKAMGWDIPVMAHIPLIHGENGAKLSKRHGALGVDAYRTMGYLPAALRNYLVRLGWSHGDDELMSLQDMISWFDIEDINKGAARFDLKKLDSINGHYMRMSNDQELFDAALDILPETDGGTEIIERLDEQRRVQFLKAIPHLKERSKTLCELIDNASFIFTQRPLQLNEKAQMLLDKNGRTILNDLYLALKACPSWDTKALDETLRSYIQTQNLKFGSIAQPLRAALTGCTTSPGVLDVLILLGRDESLYRINDQLITTVGL</sequence>
<feature type="chain" id="PRO_0000367612" description="Glutamate--tRNA ligase 1">
    <location>
        <begin position="1"/>
        <end position="476"/>
    </location>
</feature>
<feature type="short sequence motif" description="'HIGH' region" evidence="1">
    <location>
        <begin position="9"/>
        <end position="19"/>
    </location>
</feature>
<feature type="short sequence motif" description="'KMSKS' region" evidence="1">
    <location>
        <begin position="238"/>
        <end position="242"/>
    </location>
</feature>
<feature type="binding site" evidence="1">
    <location>
        <position position="241"/>
    </location>
    <ligand>
        <name>ATP</name>
        <dbReference type="ChEBI" id="CHEBI:30616"/>
    </ligand>
</feature>
<proteinExistence type="inferred from homology"/>